<reference key="1">
    <citation type="journal article" date="2001" name="Nature">
        <title>Complete genome sequence of a multiple drug resistant Salmonella enterica serovar Typhi CT18.</title>
        <authorList>
            <person name="Parkhill J."/>
            <person name="Dougan G."/>
            <person name="James K.D."/>
            <person name="Thomson N.R."/>
            <person name="Pickard D."/>
            <person name="Wain J."/>
            <person name="Churcher C.M."/>
            <person name="Mungall K.L."/>
            <person name="Bentley S.D."/>
            <person name="Holden M.T.G."/>
            <person name="Sebaihia M."/>
            <person name="Baker S."/>
            <person name="Basham D."/>
            <person name="Brooks K."/>
            <person name="Chillingworth T."/>
            <person name="Connerton P."/>
            <person name="Cronin A."/>
            <person name="Davis P."/>
            <person name="Davies R.M."/>
            <person name="Dowd L."/>
            <person name="White N."/>
            <person name="Farrar J."/>
            <person name="Feltwell T."/>
            <person name="Hamlin N."/>
            <person name="Haque A."/>
            <person name="Hien T.T."/>
            <person name="Holroyd S."/>
            <person name="Jagels K."/>
            <person name="Krogh A."/>
            <person name="Larsen T.S."/>
            <person name="Leather S."/>
            <person name="Moule S."/>
            <person name="O'Gaora P."/>
            <person name="Parry C."/>
            <person name="Quail M.A."/>
            <person name="Rutherford K.M."/>
            <person name="Simmonds M."/>
            <person name="Skelton J."/>
            <person name="Stevens K."/>
            <person name="Whitehead S."/>
            <person name="Barrell B.G."/>
        </authorList>
    </citation>
    <scope>NUCLEOTIDE SEQUENCE [LARGE SCALE GENOMIC DNA]</scope>
    <source>
        <strain>CT18</strain>
    </source>
</reference>
<reference key="2">
    <citation type="journal article" date="2003" name="J. Bacteriol.">
        <title>Comparative genomics of Salmonella enterica serovar Typhi strains Ty2 and CT18.</title>
        <authorList>
            <person name="Deng W."/>
            <person name="Liou S.-R."/>
            <person name="Plunkett G. III"/>
            <person name="Mayhew G.F."/>
            <person name="Rose D.J."/>
            <person name="Burland V."/>
            <person name="Kodoyianni V."/>
            <person name="Schwartz D.C."/>
            <person name="Blattner F.R."/>
        </authorList>
    </citation>
    <scope>NUCLEOTIDE SEQUENCE [LARGE SCALE GENOMIC DNA]</scope>
    <source>
        <strain>ATCC 700931 / Ty2</strain>
    </source>
</reference>
<accession>P58716</accession>
<protein>
    <recommendedName>
        <fullName evidence="2">Putative D-threonate 4-phosphate dehydrogenase</fullName>
        <ecNumber evidence="2">1.1.1.408</ecNumber>
    </recommendedName>
</protein>
<comment type="function">
    <text evidence="2">Catalyzes the NAD-dependent oxidation and subsequent decarboxylation of D-threonate 4-phosphate to produce dihydroxyacetone phosphate (DHAP).</text>
</comment>
<comment type="catalytic activity">
    <reaction evidence="2">
        <text>4-O-phospho-D-threonate + NAD(+) = dihydroxyacetone phosphate + CO2 + NADH</text>
        <dbReference type="Rhea" id="RHEA:52396"/>
        <dbReference type="ChEBI" id="CHEBI:16526"/>
        <dbReference type="ChEBI" id="CHEBI:57540"/>
        <dbReference type="ChEBI" id="CHEBI:57642"/>
        <dbReference type="ChEBI" id="CHEBI:57945"/>
        <dbReference type="ChEBI" id="CHEBI:136590"/>
        <dbReference type="EC" id="1.1.1.408"/>
    </reaction>
</comment>
<comment type="cofactor">
    <cofactor evidence="1">
        <name>a divalent metal cation</name>
        <dbReference type="ChEBI" id="CHEBI:60240"/>
    </cofactor>
    <text evidence="1">Binds 1 divalent metal cation per subunit.</text>
</comment>
<comment type="subunit">
    <text evidence="2">Homodimer.</text>
</comment>
<comment type="similarity">
    <text evidence="3">Belongs to the PdxA family. PdxA2 subfamily.</text>
</comment>
<feature type="chain" id="PRO_0000188827" description="Putative D-threonate 4-phosphate dehydrogenase">
    <location>
        <begin position="1"/>
        <end position="327"/>
    </location>
</feature>
<feature type="binding site" evidence="1">
    <location>
        <position position="139"/>
    </location>
    <ligand>
        <name>substrate</name>
    </ligand>
</feature>
<feature type="binding site" evidence="1">
    <location>
        <position position="140"/>
    </location>
    <ligand>
        <name>substrate</name>
    </ligand>
</feature>
<feature type="binding site" evidence="1">
    <location>
        <position position="169"/>
    </location>
    <ligand>
        <name>a divalent metal cation</name>
        <dbReference type="ChEBI" id="CHEBI:60240"/>
        <note>ligand shared between dimeric partners</note>
    </ligand>
</feature>
<feature type="binding site" evidence="1">
    <location>
        <position position="213"/>
    </location>
    <ligand>
        <name>a divalent metal cation</name>
        <dbReference type="ChEBI" id="CHEBI:60240"/>
        <note>ligand shared between dimeric partners</note>
    </ligand>
</feature>
<feature type="binding site" evidence="1">
    <location>
        <position position="268"/>
    </location>
    <ligand>
        <name>a divalent metal cation</name>
        <dbReference type="ChEBI" id="CHEBI:60240"/>
        <note>ligand shared between dimeric partners</note>
    </ligand>
</feature>
<feature type="binding site" evidence="1">
    <location>
        <position position="276"/>
    </location>
    <ligand>
        <name>substrate</name>
    </ligand>
</feature>
<feature type="binding site" evidence="1">
    <location>
        <position position="285"/>
    </location>
    <ligand>
        <name>substrate</name>
    </ligand>
</feature>
<feature type="binding site" evidence="1">
    <location>
        <position position="294"/>
    </location>
    <ligand>
        <name>substrate</name>
    </ligand>
</feature>
<organism>
    <name type="scientific">Salmonella typhi</name>
    <dbReference type="NCBI Taxonomy" id="90370"/>
    <lineage>
        <taxon>Bacteria</taxon>
        <taxon>Pseudomonadati</taxon>
        <taxon>Pseudomonadota</taxon>
        <taxon>Gammaproteobacteria</taxon>
        <taxon>Enterobacterales</taxon>
        <taxon>Enterobacteriaceae</taxon>
        <taxon>Salmonella</taxon>
    </lineage>
</organism>
<dbReference type="EC" id="1.1.1.408" evidence="2"/>
<dbReference type="EMBL" id="AL513382">
    <property type="protein sequence ID" value="CAD01321.1"/>
    <property type="molecule type" value="Genomic_DNA"/>
</dbReference>
<dbReference type="EMBL" id="AE014613">
    <property type="protein sequence ID" value="AAO67900.1"/>
    <property type="molecule type" value="Genomic_DNA"/>
</dbReference>
<dbReference type="RefSeq" id="NP_454776.1">
    <property type="nucleotide sequence ID" value="NC_003198.1"/>
</dbReference>
<dbReference type="RefSeq" id="WP_000448742.1">
    <property type="nucleotide sequence ID" value="NZ_WSUR01000009.1"/>
</dbReference>
<dbReference type="SMR" id="P58716"/>
<dbReference type="STRING" id="220341.gene:17584223"/>
<dbReference type="KEGG" id="stt:t0168"/>
<dbReference type="KEGG" id="sty:STY0185"/>
<dbReference type="PATRIC" id="fig|220341.7.peg.188"/>
<dbReference type="eggNOG" id="COG1995">
    <property type="taxonomic scope" value="Bacteria"/>
</dbReference>
<dbReference type="HOGENOM" id="CLU_040168_1_0_6"/>
<dbReference type="OMA" id="APDTVFM"/>
<dbReference type="OrthoDB" id="9801783at2"/>
<dbReference type="Proteomes" id="UP000000541">
    <property type="component" value="Chromosome"/>
</dbReference>
<dbReference type="Proteomes" id="UP000002670">
    <property type="component" value="Chromosome"/>
</dbReference>
<dbReference type="GO" id="GO:0046872">
    <property type="term" value="F:metal ion binding"/>
    <property type="evidence" value="ECO:0007669"/>
    <property type="project" value="UniProtKB-KW"/>
</dbReference>
<dbReference type="GO" id="GO:0051287">
    <property type="term" value="F:NAD binding"/>
    <property type="evidence" value="ECO:0007669"/>
    <property type="project" value="InterPro"/>
</dbReference>
<dbReference type="GO" id="GO:0016491">
    <property type="term" value="F:oxidoreductase activity"/>
    <property type="evidence" value="ECO:0007669"/>
    <property type="project" value="UniProtKB-KW"/>
</dbReference>
<dbReference type="Gene3D" id="3.40.718.10">
    <property type="entry name" value="Isopropylmalate Dehydrogenase"/>
    <property type="match status" value="1"/>
</dbReference>
<dbReference type="InterPro" id="IPR005255">
    <property type="entry name" value="PdxA_fam"/>
</dbReference>
<dbReference type="NCBIfam" id="TIGR00557">
    <property type="entry name" value="pdxA"/>
    <property type="match status" value="1"/>
</dbReference>
<dbReference type="NCBIfam" id="NF002891">
    <property type="entry name" value="PRK03371.1"/>
    <property type="match status" value="1"/>
</dbReference>
<dbReference type="PANTHER" id="PTHR30004">
    <property type="entry name" value="4-HYDROXYTHREONINE-4-PHOSPHATE DEHYDROGENASE"/>
    <property type="match status" value="1"/>
</dbReference>
<dbReference type="PANTHER" id="PTHR30004:SF6">
    <property type="entry name" value="D-THREONATE 4-PHOSPHATE DEHYDROGENASE"/>
    <property type="match status" value="1"/>
</dbReference>
<dbReference type="Pfam" id="PF04166">
    <property type="entry name" value="PdxA"/>
    <property type="match status" value="1"/>
</dbReference>
<dbReference type="SUPFAM" id="SSF53659">
    <property type="entry name" value="Isocitrate/Isopropylmalate dehydrogenase-like"/>
    <property type="match status" value="1"/>
</dbReference>
<sequence length="327" mass="35042">METKTVAITMGDPAGIGPEIIVKALSEDGLNGAPLVVIGCLATLKCLQAKGITPNVELRAIERVAEARFAPGIIHVIDEPLAQPEALEAGKVQAQAGDLAYRCVKRATELALRGDVQAIATAPLNKEALHLAGHNYPGHTELLATLTHSRDYAMVLYTDKLKVIHVSTHIALRKFLDTLSTTRVETVIGIADTFLKRVGYVKPRIAVAGVNPHAGENGLFGDEETRILTPAITDARAKGMDVYGPCPPDTVFLQAYEGQYDMVVAMYHDQGHIPLKLLGFYDGVNITAGLPFIRTSADHGTAFDIAWTGKAKSESMAVSIKLAMQLA</sequence>
<name>PDXA2_SALTI</name>
<gene>
    <name evidence="2" type="primary">pdxA2</name>
    <name type="ordered locus">STY0185</name>
    <name type="ordered locus">t0168</name>
</gene>
<keyword id="KW-0119">Carbohydrate metabolism</keyword>
<keyword id="KW-0479">Metal-binding</keyword>
<keyword id="KW-0520">NAD</keyword>
<keyword id="KW-0560">Oxidoreductase</keyword>
<evidence type="ECO:0000250" key="1">
    <source>
        <dbReference type="UniProtKB" id="P19624"/>
    </source>
</evidence>
<evidence type="ECO:0000250" key="2">
    <source>
        <dbReference type="UniProtKB" id="P58718"/>
    </source>
</evidence>
<evidence type="ECO:0000305" key="3"/>
<proteinExistence type="inferred from homology"/>